<protein>
    <recommendedName>
        <fullName>UDP-glucose 4-epimerase</fullName>
        <ecNumber>5.1.3.2</ecNumber>
    </recommendedName>
    <alternativeName>
        <fullName>Galactowaldenase</fullName>
    </alternativeName>
    <alternativeName>
        <fullName>UDP-galactose 4-epimerase</fullName>
    </alternativeName>
</protein>
<evidence type="ECO:0000250" key="1"/>
<evidence type="ECO:0000305" key="2"/>
<feature type="chain" id="PRO_0000314599" description="UDP-glucose 4-epimerase">
    <location>
        <begin position="1"/>
        <end position="341"/>
    </location>
</feature>
<accession>A8GN21</accession>
<organism>
    <name type="scientific">Rickettsia akari (strain Hartford)</name>
    <dbReference type="NCBI Taxonomy" id="293614"/>
    <lineage>
        <taxon>Bacteria</taxon>
        <taxon>Pseudomonadati</taxon>
        <taxon>Pseudomonadota</taxon>
        <taxon>Alphaproteobacteria</taxon>
        <taxon>Rickettsiales</taxon>
        <taxon>Rickettsiaceae</taxon>
        <taxon>Rickettsieae</taxon>
        <taxon>Rickettsia</taxon>
        <taxon>spotted fever group</taxon>
    </lineage>
</organism>
<comment type="function">
    <text evidence="1">Epimerizes UDP-galactose to UDP-glucose.</text>
</comment>
<comment type="catalytic activity">
    <reaction>
        <text>UDP-alpha-D-glucose = UDP-alpha-D-galactose</text>
        <dbReference type="Rhea" id="RHEA:22168"/>
        <dbReference type="ChEBI" id="CHEBI:58885"/>
        <dbReference type="ChEBI" id="CHEBI:66914"/>
        <dbReference type="EC" id="5.1.3.2"/>
    </reaction>
</comment>
<comment type="similarity">
    <text evidence="2">Belongs to the polysaccharide synthase family.</text>
</comment>
<sequence>MFVDKTLMITGGTGSFGNAVLSRFLKSDIINDIKEIRIFSRDEKKQEDMRIALSNPKLKFYIGDVRNYKSIDEAMRGVDYVFHAAALKQVPTCEFYPMEAINTNVLGAENVLSAAINNKVAKVIVLSTDKAVYPINAMGLSKALMEKLSIAKARMCSQGETVLCVTRYGNVMASRGSVIPLFINQIKQGKELTITEPSMTRFLMSLVDSVDLVLYAFEHGRQGDIFVQKSPASTIEILAKALQEIFGSKNKIRFIGTRHGEKHYESLVSSEDMAKADDLGGYYRIPMDGRDLNYAKYFVEGEKKVALLEDYTSHNTKRLNLEEVKKLLLTLDYIQEELKNA</sequence>
<gene>
    <name type="primary">capD</name>
    <name type="ordered locus">A1C_02485</name>
</gene>
<dbReference type="EC" id="5.1.3.2"/>
<dbReference type="EMBL" id="CP000847">
    <property type="protein sequence ID" value="ABV74796.1"/>
    <property type="molecule type" value="Genomic_DNA"/>
</dbReference>
<dbReference type="RefSeq" id="WP_012149430.1">
    <property type="nucleotide sequence ID" value="NC_009881.1"/>
</dbReference>
<dbReference type="SMR" id="A8GN21"/>
<dbReference type="STRING" id="293614.A1C_02485"/>
<dbReference type="KEGG" id="rak:A1C_02485"/>
<dbReference type="eggNOG" id="COG1086">
    <property type="taxonomic scope" value="Bacteria"/>
</dbReference>
<dbReference type="HOGENOM" id="CLU_013560_4_1_5"/>
<dbReference type="Proteomes" id="UP000006830">
    <property type="component" value="Chromosome"/>
</dbReference>
<dbReference type="GO" id="GO:0003978">
    <property type="term" value="F:UDP-glucose 4-epimerase activity"/>
    <property type="evidence" value="ECO:0007669"/>
    <property type="project" value="UniProtKB-EC"/>
</dbReference>
<dbReference type="GO" id="GO:0009103">
    <property type="term" value="P:lipopolysaccharide biosynthetic process"/>
    <property type="evidence" value="ECO:0007669"/>
    <property type="project" value="UniProtKB-KW"/>
</dbReference>
<dbReference type="CDD" id="cd05237">
    <property type="entry name" value="UDP_invert_4-6DH_SDR_e"/>
    <property type="match status" value="1"/>
</dbReference>
<dbReference type="Gene3D" id="3.40.50.720">
    <property type="entry name" value="NAD(P)-binding Rossmann-like Domain"/>
    <property type="match status" value="1"/>
</dbReference>
<dbReference type="InterPro" id="IPR013692">
    <property type="entry name" value="CapD_C"/>
</dbReference>
<dbReference type="InterPro" id="IPR036291">
    <property type="entry name" value="NAD(P)-bd_dom_sf"/>
</dbReference>
<dbReference type="InterPro" id="IPR003869">
    <property type="entry name" value="Polysac_CapD-like"/>
</dbReference>
<dbReference type="InterPro" id="IPR051203">
    <property type="entry name" value="Polysaccharide_Synthase-Rel"/>
</dbReference>
<dbReference type="PANTHER" id="PTHR43318">
    <property type="entry name" value="UDP-N-ACETYLGLUCOSAMINE 4,6-DEHYDRATASE"/>
    <property type="match status" value="1"/>
</dbReference>
<dbReference type="PANTHER" id="PTHR43318:SF2">
    <property type="entry name" value="UDP-N-ACETYLGLUCOSAMINE 4,6-DEHYDRATASE (INVERTING)"/>
    <property type="match status" value="1"/>
</dbReference>
<dbReference type="Pfam" id="PF08485">
    <property type="entry name" value="Polysacc_syn_2C"/>
    <property type="match status" value="1"/>
</dbReference>
<dbReference type="Pfam" id="PF02719">
    <property type="entry name" value="Polysacc_synt_2"/>
    <property type="match status" value="1"/>
</dbReference>
<dbReference type="SUPFAM" id="SSF51735">
    <property type="entry name" value="NAD(P)-binding Rossmann-fold domains"/>
    <property type="match status" value="1"/>
</dbReference>
<reference key="1">
    <citation type="submission" date="2007-09" db="EMBL/GenBank/DDBJ databases">
        <title>Complete genome sequence of Rickettsia akari.</title>
        <authorList>
            <person name="Madan A."/>
            <person name="Fahey J."/>
            <person name="Helton E."/>
            <person name="Ketteman M."/>
            <person name="Madan A."/>
            <person name="Rodrigues S."/>
            <person name="Sanchez A."/>
            <person name="Whiting M."/>
            <person name="Dasch G."/>
            <person name="Eremeeva M."/>
        </authorList>
    </citation>
    <scope>NUCLEOTIDE SEQUENCE [LARGE SCALE GENOMIC DNA]</scope>
    <source>
        <strain>Hartford</strain>
    </source>
</reference>
<keyword id="KW-0413">Isomerase</keyword>
<keyword id="KW-0448">Lipopolysaccharide biosynthesis</keyword>
<proteinExistence type="inferred from homology"/>
<name>CAPD_RICAH</name>